<proteinExistence type="evidence at protein level"/>
<sequence length="88" mass="9527">AFAGVLADADIKAALAGCAAADSFNYKTFFKSPEEVKKFFAIIDQDHSGFIEEEELKLFLQTFSAGARALSDAETKIGVDEFATMVKX</sequence>
<keyword id="KW-0007">Acetylation</keyword>
<keyword id="KW-0020">Allergen</keyword>
<keyword id="KW-0106">Calcium</keyword>
<keyword id="KW-0903">Direct protein sequencing</keyword>
<keyword id="KW-0479">Metal-binding</keyword>
<keyword id="KW-0514">Muscle protein</keyword>
<name>PRVB3_MERPR</name>
<dbReference type="iPTMnet" id="P86776"/>
<dbReference type="GO" id="GO:0005737">
    <property type="term" value="C:cytoplasm"/>
    <property type="evidence" value="ECO:0007669"/>
    <property type="project" value="TreeGrafter"/>
</dbReference>
<dbReference type="GO" id="GO:0005509">
    <property type="term" value="F:calcium ion binding"/>
    <property type="evidence" value="ECO:0007669"/>
    <property type="project" value="InterPro"/>
</dbReference>
<dbReference type="Gene3D" id="1.10.238.10">
    <property type="entry name" value="EF-hand"/>
    <property type="match status" value="1"/>
</dbReference>
<dbReference type="InterPro" id="IPR011992">
    <property type="entry name" value="EF-hand-dom_pair"/>
</dbReference>
<dbReference type="InterPro" id="IPR018247">
    <property type="entry name" value="EF_Hand_1_Ca_BS"/>
</dbReference>
<dbReference type="InterPro" id="IPR002048">
    <property type="entry name" value="EF_hand_dom"/>
</dbReference>
<dbReference type="InterPro" id="IPR008080">
    <property type="entry name" value="Parvalbumin"/>
</dbReference>
<dbReference type="PANTHER" id="PTHR11653:SF12">
    <property type="entry name" value="PARVALBUMIN"/>
    <property type="match status" value="1"/>
</dbReference>
<dbReference type="PANTHER" id="PTHR11653">
    <property type="entry name" value="PARVALBUMIN ALPHA"/>
    <property type="match status" value="1"/>
</dbReference>
<dbReference type="Pfam" id="PF00036">
    <property type="entry name" value="EF-hand_1"/>
    <property type="match status" value="1"/>
</dbReference>
<dbReference type="PRINTS" id="PR01697">
    <property type="entry name" value="PARVALBUMIN"/>
</dbReference>
<dbReference type="SMART" id="SM00054">
    <property type="entry name" value="EFh"/>
    <property type="match status" value="1"/>
</dbReference>
<dbReference type="SUPFAM" id="SSF47473">
    <property type="entry name" value="EF-hand"/>
    <property type="match status" value="1"/>
</dbReference>
<dbReference type="PROSITE" id="PS00018">
    <property type="entry name" value="EF_HAND_1"/>
    <property type="match status" value="1"/>
</dbReference>
<dbReference type="PROSITE" id="PS50222">
    <property type="entry name" value="EF_HAND_2"/>
    <property type="match status" value="1"/>
</dbReference>
<organism>
    <name type="scientific">Merluccius productus</name>
    <name type="common">North Pacific hake</name>
    <name type="synonym">Merlangus productus</name>
    <dbReference type="NCBI Taxonomy" id="89952"/>
    <lineage>
        <taxon>Eukaryota</taxon>
        <taxon>Metazoa</taxon>
        <taxon>Chordata</taxon>
        <taxon>Craniata</taxon>
        <taxon>Vertebrata</taxon>
        <taxon>Euteleostomi</taxon>
        <taxon>Actinopterygii</taxon>
        <taxon>Neopterygii</taxon>
        <taxon>Teleostei</taxon>
        <taxon>Neoteleostei</taxon>
        <taxon>Acanthomorphata</taxon>
        <taxon>Zeiogadaria</taxon>
        <taxon>Gadariae</taxon>
        <taxon>Gadiformes</taxon>
        <taxon>Gadoidei</taxon>
        <taxon>Merlucciidae</taxon>
        <taxon>Merluccius</taxon>
    </lineage>
</organism>
<feature type="chain" id="PRO_0000399436" description="Parvalbumin beta 3">
    <location>
        <begin position="1"/>
        <end position="88" status="greater than"/>
    </location>
</feature>
<feature type="domain" description="EF-hand" evidence="5">
    <location>
        <begin position="31"/>
        <end position="66"/>
    </location>
</feature>
<feature type="binding site" evidence="5">
    <location>
        <position position="44"/>
    </location>
    <ligand>
        <name>Ca(2+)</name>
        <dbReference type="ChEBI" id="CHEBI:29108"/>
        <label>1</label>
    </ligand>
</feature>
<feature type="binding site" evidence="5">
    <location>
        <position position="46"/>
    </location>
    <ligand>
        <name>Ca(2+)</name>
        <dbReference type="ChEBI" id="CHEBI:29108"/>
        <label>1</label>
    </ligand>
</feature>
<feature type="binding site" evidence="5">
    <location>
        <position position="48"/>
    </location>
    <ligand>
        <name>Ca(2+)</name>
        <dbReference type="ChEBI" id="CHEBI:29108"/>
        <label>1</label>
    </ligand>
</feature>
<feature type="binding site" evidence="1">
    <location>
        <position position="50"/>
    </location>
    <ligand>
        <name>Ca(2+)</name>
        <dbReference type="ChEBI" id="CHEBI:29108"/>
        <label>1</label>
    </ligand>
</feature>
<feature type="binding site" evidence="1">
    <location>
        <position position="52"/>
    </location>
    <ligand>
        <name>Ca(2+)</name>
        <dbReference type="ChEBI" id="CHEBI:29108"/>
        <label>1</label>
    </ligand>
</feature>
<feature type="binding site" evidence="5">
    <location>
        <position position="55"/>
    </location>
    <ligand>
        <name>Ca(2+)</name>
        <dbReference type="ChEBI" id="CHEBI:29108"/>
        <label>1</label>
    </ligand>
</feature>
<feature type="binding site" evidence="1">
    <location>
        <position position="81"/>
    </location>
    <ligand>
        <name>Ca(2+)</name>
        <dbReference type="ChEBI" id="CHEBI:29108"/>
        <label>2</label>
    </ligand>
</feature>
<feature type="modified residue" description="N-acetylalanine" evidence="6">
    <location>
        <position position="1"/>
    </location>
</feature>
<feature type="unsure residue" description="L or I" evidence="6">
    <location>
        <position position="6"/>
    </location>
</feature>
<feature type="unsure residue" description="I or L" evidence="6">
    <location>
        <position position="11"/>
    </location>
</feature>
<feature type="unsure residue" description="K or Q" evidence="6">
    <location>
        <position position="12"/>
    </location>
</feature>
<feature type="unsure residue" description="L or I" evidence="6">
    <location>
        <position position="15"/>
    </location>
</feature>
<feature type="unsure residue" description="K or Q" evidence="6">
    <location>
        <position position="27"/>
    </location>
</feature>
<feature type="unsure residue" description="K or Q" evidence="6">
    <location>
        <position position="31"/>
    </location>
</feature>
<feature type="unsure residue" description="K or Q" evidence="6">
    <location>
        <position position="37"/>
    </location>
</feature>
<feature type="unsure residue" description="K or Q" evidence="6">
    <location>
        <position position="38"/>
    </location>
</feature>
<feature type="unsure residue" description="I or L" evidence="6">
    <location>
        <position position="42"/>
    </location>
</feature>
<feature type="unsure residue" description="I or L" evidence="6">
    <location>
        <position position="43"/>
    </location>
</feature>
<feature type="unsure residue" description="Q or K" evidence="6">
    <location>
        <position position="45"/>
    </location>
</feature>
<feature type="unsure residue" description="I or L" evidence="6">
    <location>
        <position position="51"/>
    </location>
</feature>
<feature type="unsure residue" description="L or I" evidence="6">
    <location>
        <position position="56"/>
    </location>
</feature>
<feature type="unsure residue" description="K or Q" evidence="6">
    <location>
        <position position="57"/>
    </location>
</feature>
<feature type="unsure residue" description="L or I" evidence="6">
    <location>
        <position position="58"/>
    </location>
</feature>
<feature type="unsure residue" description="L or I" evidence="6">
    <location>
        <position position="60"/>
    </location>
</feature>
<feature type="unsure residue" description="Q or K" evidence="6">
    <location>
        <position position="61"/>
    </location>
</feature>
<feature type="unsure residue" description="L or I" evidence="6">
    <location>
        <position position="70"/>
    </location>
</feature>
<feature type="unsure residue" description="K or Q" evidence="6">
    <location>
        <position position="76"/>
    </location>
</feature>
<feature type="unsure residue" description="I or L" evidence="6">
    <location>
        <position position="77"/>
    </location>
</feature>
<feature type="unsure residue" description="K or Q" evidence="6">
    <location>
        <position position="87"/>
    </location>
</feature>
<feature type="non-consecutive residues" evidence="7">
    <location>
        <begin position="31"/>
        <end position="32"/>
    </location>
</feature>
<feature type="non-consecutive residues" evidence="7">
    <location>
        <begin position="76"/>
        <end position="77"/>
    </location>
</feature>
<feature type="non-terminal residue" evidence="7">
    <location>
        <position position="88"/>
    </location>
</feature>
<comment type="function">
    <text evidence="2 3">In muscle, parvalbumin is thought to be involved in relaxation after contraction. It binds two calcium ions (By similarity).</text>
</comment>
<comment type="miscellaneous">
    <text evidence="2 6">Is regarded as an important allergen.</text>
</comment>
<comment type="miscellaneous">
    <text evidence="6">On the 2D-gel the determined pI of this protein is: 4.23, its MW is: 11.35 kDa.</text>
</comment>
<comment type="similarity">
    <text evidence="4">Belongs to the parvalbumin family.</text>
</comment>
<evidence type="ECO:0000250" key="1">
    <source>
        <dbReference type="UniProtKB" id="P02621"/>
    </source>
</evidence>
<evidence type="ECO:0000250" key="2">
    <source>
        <dbReference type="UniProtKB" id="P02622"/>
    </source>
</evidence>
<evidence type="ECO:0000250" key="3">
    <source>
        <dbReference type="UniProtKB" id="P02624"/>
    </source>
</evidence>
<evidence type="ECO:0000255" key="4"/>
<evidence type="ECO:0000255" key="5">
    <source>
        <dbReference type="PROSITE-ProRule" id="PRU00448"/>
    </source>
</evidence>
<evidence type="ECO:0000269" key="6">
    <source>
    </source>
</evidence>
<evidence type="ECO:0000303" key="7">
    <source>
    </source>
</evidence>
<evidence type="ECO:0000305" key="8"/>
<protein>
    <recommendedName>
        <fullName evidence="7">Parvalbumin beta 3</fullName>
    </recommendedName>
</protein>
<accession>P86776</accession>
<reference evidence="8" key="1">
    <citation type="journal article" date="2010" name="J. Proteome Res.">
        <title>Extensive de novo sequencing of new parvalbumin isoforms using a novel combination of bottom-up proteomics, accurate molecular mass measurement by FTICR-MS, and selected MS/MS ion monitoring.</title>
        <authorList>
            <person name="Carrera M."/>
            <person name="Canas B."/>
            <person name="Vazquez J."/>
            <person name="Gallardo J.M."/>
        </authorList>
    </citation>
    <scope>PROTEIN SEQUENCE</scope>
    <scope>ACETYLATION AT ALA-1</scope>
    <source>
        <tissue evidence="6">Muscle</tissue>
    </source>
</reference>